<organism>
    <name type="scientific">Nicotiana sylvestris</name>
    <name type="common">Wood tobacco</name>
    <name type="synonym">South American tobacco</name>
    <dbReference type="NCBI Taxonomy" id="4096"/>
    <lineage>
        <taxon>Eukaryota</taxon>
        <taxon>Viridiplantae</taxon>
        <taxon>Streptophyta</taxon>
        <taxon>Embryophyta</taxon>
        <taxon>Tracheophyta</taxon>
        <taxon>Spermatophyta</taxon>
        <taxon>Magnoliopsida</taxon>
        <taxon>eudicotyledons</taxon>
        <taxon>Gunneridae</taxon>
        <taxon>Pentapetalae</taxon>
        <taxon>asterids</taxon>
        <taxon>lamiids</taxon>
        <taxon>Solanales</taxon>
        <taxon>Solanaceae</taxon>
        <taxon>Nicotianoideae</taxon>
        <taxon>Nicotianeae</taxon>
        <taxon>Nicotiana</taxon>
    </lineage>
</organism>
<gene>
    <name evidence="5" type="primary">A622</name>
    <name evidence="7" type="synonym">LOC104247368</name>
</gene>
<feature type="chain" id="PRO_0000455799" description="Isoflavone reductase homolog A622">
    <location>
        <begin position="1"/>
        <end position="310"/>
    </location>
</feature>
<feature type="active site" description="Proton acceptor" evidence="3">
    <location>
        <position position="135"/>
    </location>
</feature>
<feature type="binding site" evidence="3">
    <location>
        <begin position="13"/>
        <end position="19"/>
    </location>
    <ligand>
        <name>NADP(+)</name>
        <dbReference type="ChEBI" id="CHEBI:58349"/>
    </ligand>
</feature>
<feature type="binding site" evidence="3">
    <location>
        <position position="38"/>
    </location>
    <ligand>
        <name>NADP(+)</name>
        <dbReference type="ChEBI" id="CHEBI:58349"/>
    </ligand>
</feature>
<feature type="binding site" evidence="3">
    <location>
        <position position="47"/>
    </location>
    <ligand>
        <name>NADP(+)</name>
        <dbReference type="ChEBI" id="CHEBI:58349"/>
    </ligand>
</feature>
<feature type="binding site" evidence="3">
    <location>
        <position position="139"/>
    </location>
    <ligand>
        <name>NADP(+)</name>
        <dbReference type="ChEBI" id="CHEBI:58349"/>
    </ligand>
</feature>
<comment type="function">
    <text evidence="1 4">NADPH-binding protein (PubMed:12369619). Involved in the biosynthesis of pyridine alkaloid natural products, leading mainly to the production of anabasine, anatabine, nicotine and nornicotine, effective deterrents against herbivores with antiparasitic and pesticide properties (neurotoxins); nornicotine serves as the precursor in the synthesis of the carcinogen compound N'-nitrosonornicotine (NNN) (By similarity). Reductase involved in a late step of tobacco alkaloid biosynthesis (By similarity). Triggers either the formation of a nicotinic acid-derived precursor or the final condensation reaction of tobacco alkaloids (By similarity).</text>
</comment>
<comment type="pathway">
    <text evidence="1">Alkaloid biosynthesis; nicotine biosynthesis.</text>
</comment>
<comment type="subunit">
    <text evidence="2">Monomer.</text>
</comment>
<comment type="subcellular location">
    <subcellularLocation>
        <location evidence="4">Cytoplasm</location>
    </subcellularLocation>
</comment>
<comment type="tissue specificity">
    <text evidence="4">Expressed in roots and stems.</text>
</comment>
<comment type="developmental stage">
    <text evidence="4">In roots, mainly localized in apical zones, including root tips, in both endodermis and cortex tissues (PubMed:12369619). In the differentiated region where root hairs are present, localized in cortex, endodermis and xylem (PubMed:12369619).</text>
</comment>
<comment type="induction">
    <text evidence="4">Stimulated in roots by jasmonic acid (MeJa) in a dose-dependent manner.</text>
</comment>
<comment type="similarity">
    <text evidence="6">Belongs to the NmrA-type oxidoreductase family. Isoflavone reductase subfamily.</text>
</comment>
<reference key="1">
    <citation type="journal article" date="2002" name="Plant Mol. Biol.">
        <title>Expression patterns of two tobacco isoflavone reductase-like genes and their possible roles in secondary metabolism in tobacco.</title>
        <authorList>
            <person name="Shoji T."/>
            <person name="Winz R."/>
            <person name="Iwase T."/>
            <person name="Nakajima K."/>
            <person name="Yamada Y."/>
            <person name="Hashimoto T."/>
        </authorList>
    </citation>
    <scope>NUCLEOTIDE SEQUENCE [GENOMIC DNA]</scope>
    <scope>FUNCTION</scope>
    <scope>TISSUE SPECIFICITY</scope>
    <scope>DEVELOPMENTAL STAGE</scope>
    <scope>INDUCTION BY JASMONIC ACID</scope>
    <scope>SUBCELLULAR LOCATION</scope>
    <source>
        <tissue>Flower</tissue>
    </source>
</reference>
<reference key="2">
    <citation type="journal article" date="2013" name="Genome Biol.">
        <title>Reference genomes and transcriptomes of Nicotiana sylvestris and Nicotiana tomentosiformis.</title>
        <authorList>
            <person name="Sierro N."/>
            <person name="Battey J.N."/>
            <person name="Ouadi S."/>
            <person name="Bovet L."/>
            <person name="Goepfert S."/>
            <person name="Bakaher N."/>
            <person name="Peitsch M.C."/>
            <person name="Ivanov N.V."/>
        </authorList>
    </citation>
    <scope>NUCLEOTIDE SEQUENCE [LARGE SCALE GENOMIC DNA]</scope>
</reference>
<proteinExistence type="evidence at transcript level"/>
<name>IFRH_NICSY</name>
<sequence length="310" mass="34654">MVVSEKSKILIIGGTGYIGKYLVETSAKSGHPTFALIRESTLKNPEKSKLIDTFKSYGVTLLFGDISNQESLLKAIKQVDVVISTVGGQQFTDQVNIIKAIKEAGNIKRFLPSEFGFDVDHARAIEPAASLFALKVRIRRMIEAEGIPYTYVICNWFADFFLPNLGQLEAKTPPRDKVVIFGDGNPKAIYVKEEDIATYTIEAVDDPRTLNKTLHMRPPANILSFNEIVSLWEDKIGKTLEKLYLSEEDILQIVQEGPLPLRTNLAICHSVFVNGDSANFEVQPPTGVEATELYPKVKYTTVDEFYNKFV</sequence>
<accession>Q76LW3</accession>
<dbReference type="EC" id="1.3.1.-" evidence="6"/>
<dbReference type="EMBL" id="AB071165">
    <property type="protein sequence ID" value="BAB83609.1"/>
    <property type="molecule type" value="Genomic_DNA"/>
</dbReference>
<dbReference type="RefSeq" id="XP_009801661.1">
    <property type="nucleotide sequence ID" value="XM_009803359.1"/>
</dbReference>
<dbReference type="SMR" id="Q76LW3"/>
<dbReference type="STRING" id="4096.Q76LW3"/>
<dbReference type="GeneID" id="104247368"/>
<dbReference type="KEGG" id="nsy:104247368"/>
<dbReference type="eggNOG" id="ENOG502QPMY">
    <property type="taxonomic scope" value="Eukaryota"/>
</dbReference>
<dbReference type="OrthoDB" id="2544at4085"/>
<dbReference type="UniPathway" id="UPA00107"/>
<dbReference type="Proteomes" id="UP000189701">
    <property type="component" value="Unplaced"/>
</dbReference>
<dbReference type="GO" id="GO:0005737">
    <property type="term" value="C:cytoplasm"/>
    <property type="evidence" value="ECO:0000314"/>
    <property type="project" value="UniProtKB"/>
</dbReference>
<dbReference type="GO" id="GO:0070402">
    <property type="term" value="F:NADPH binding"/>
    <property type="evidence" value="ECO:0000314"/>
    <property type="project" value="UniProtKB"/>
</dbReference>
<dbReference type="GO" id="GO:0016491">
    <property type="term" value="F:oxidoreductase activity"/>
    <property type="evidence" value="ECO:0007669"/>
    <property type="project" value="UniProtKB-KW"/>
</dbReference>
<dbReference type="GO" id="GO:0009820">
    <property type="term" value="P:alkaloid metabolic process"/>
    <property type="evidence" value="ECO:0007669"/>
    <property type="project" value="UniProtKB-KW"/>
</dbReference>
<dbReference type="GO" id="GO:0042179">
    <property type="term" value="P:nicotine biosynthetic process"/>
    <property type="evidence" value="ECO:0007669"/>
    <property type="project" value="UniProtKB-UniPathway"/>
</dbReference>
<dbReference type="GO" id="GO:0009753">
    <property type="term" value="P:response to jasmonic acid"/>
    <property type="evidence" value="ECO:0000270"/>
    <property type="project" value="UniProtKB"/>
</dbReference>
<dbReference type="CDD" id="cd05259">
    <property type="entry name" value="PCBER_SDR_a"/>
    <property type="match status" value="1"/>
</dbReference>
<dbReference type="Gene3D" id="3.40.50.720">
    <property type="entry name" value="NAD(P)-binding Rossmann-like Domain"/>
    <property type="match status" value="1"/>
</dbReference>
<dbReference type="Gene3D" id="3.90.25.10">
    <property type="entry name" value="UDP-galactose 4-epimerase, domain 1"/>
    <property type="match status" value="1"/>
</dbReference>
<dbReference type="InterPro" id="IPR036291">
    <property type="entry name" value="NAD(P)-bd_dom_sf"/>
</dbReference>
<dbReference type="InterPro" id="IPR008030">
    <property type="entry name" value="NmrA-like"/>
</dbReference>
<dbReference type="InterPro" id="IPR050608">
    <property type="entry name" value="NmrA-type/Isoflavone_red_sf"/>
</dbReference>
<dbReference type="InterPro" id="IPR045312">
    <property type="entry name" value="PCBER-like"/>
</dbReference>
<dbReference type="PANTHER" id="PTHR43349:SF49">
    <property type="entry name" value="ISOFLAVONE REDUCTASE HOMOLOG A622"/>
    <property type="match status" value="1"/>
</dbReference>
<dbReference type="PANTHER" id="PTHR43349">
    <property type="entry name" value="PINORESINOL REDUCTASE-RELATED"/>
    <property type="match status" value="1"/>
</dbReference>
<dbReference type="Pfam" id="PF05368">
    <property type="entry name" value="NmrA"/>
    <property type="match status" value="1"/>
</dbReference>
<dbReference type="SUPFAM" id="SSF51735">
    <property type="entry name" value="NAD(P)-binding Rossmann-fold domains"/>
    <property type="match status" value="1"/>
</dbReference>
<keyword id="KW-0017">Alkaloid metabolism</keyword>
<keyword id="KW-0963">Cytoplasm</keyword>
<keyword id="KW-0521">NADP</keyword>
<keyword id="KW-0560">Oxidoreductase</keyword>
<keyword id="KW-1185">Reference proteome</keyword>
<evidence type="ECO:0000250" key="1">
    <source>
        <dbReference type="UniProtKB" id="B7UEU8"/>
    </source>
</evidence>
<evidence type="ECO:0000250" key="2">
    <source>
        <dbReference type="UniProtKB" id="P52580"/>
    </source>
</evidence>
<evidence type="ECO:0000250" key="3">
    <source>
        <dbReference type="UniProtKB" id="Q9LD14"/>
    </source>
</evidence>
<evidence type="ECO:0000269" key="4">
    <source>
    </source>
</evidence>
<evidence type="ECO:0000303" key="5">
    <source>
    </source>
</evidence>
<evidence type="ECO:0000305" key="6"/>
<evidence type="ECO:0000312" key="7">
    <source>
        <dbReference type="RefSeq" id="XP_009801661.1"/>
    </source>
</evidence>
<protein>
    <recommendedName>
        <fullName evidence="5">Isoflavone reductase homolog A622</fullName>
        <shortName evidence="5">NsA622</shortName>
        <ecNumber evidence="6">1.3.1.-</ecNumber>
    </recommendedName>
</protein>